<accession>Q0TF64</accession>
<comment type="function">
    <text evidence="1">Catalyzes the attachment of glutamate to tRNA(Glu) in a two-step reaction: glutamate is first activated by ATP to form Glu-AMP and then transferred to the acceptor end of tRNA(Glu).</text>
</comment>
<comment type="catalytic activity">
    <reaction evidence="1">
        <text>tRNA(Glu) + L-glutamate + ATP = L-glutamyl-tRNA(Glu) + AMP + diphosphate</text>
        <dbReference type="Rhea" id="RHEA:23540"/>
        <dbReference type="Rhea" id="RHEA-COMP:9663"/>
        <dbReference type="Rhea" id="RHEA-COMP:9680"/>
        <dbReference type="ChEBI" id="CHEBI:29985"/>
        <dbReference type="ChEBI" id="CHEBI:30616"/>
        <dbReference type="ChEBI" id="CHEBI:33019"/>
        <dbReference type="ChEBI" id="CHEBI:78442"/>
        <dbReference type="ChEBI" id="CHEBI:78520"/>
        <dbReference type="ChEBI" id="CHEBI:456215"/>
        <dbReference type="EC" id="6.1.1.17"/>
    </reaction>
</comment>
<comment type="cofactor">
    <cofactor evidence="1">
        <name>Zn(2+)</name>
        <dbReference type="ChEBI" id="CHEBI:29105"/>
    </cofactor>
    <text evidence="1">Binds 1 zinc ion per subunit.</text>
</comment>
<comment type="subunit">
    <text evidence="1">Monomer.</text>
</comment>
<comment type="subcellular location">
    <subcellularLocation>
        <location evidence="1">Cytoplasm</location>
    </subcellularLocation>
</comment>
<comment type="similarity">
    <text evidence="1">Belongs to the class-I aminoacyl-tRNA synthetase family. Glutamate--tRNA ligase type 1 subfamily.</text>
</comment>
<evidence type="ECO:0000255" key="1">
    <source>
        <dbReference type="HAMAP-Rule" id="MF_00022"/>
    </source>
</evidence>
<keyword id="KW-0030">Aminoacyl-tRNA synthetase</keyword>
<keyword id="KW-0067">ATP-binding</keyword>
<keyword id="KW-0963">Cytoplasm</keyword>
<keyword id="KW-0436">Ligase</keyword>
<keyword id="KW-0479">Metal-binding</keyword>
<keyword id="KW-0547">Nucleotide-binding</keyword>
<keyword id="KW-0648">Protein biosynthesis</keyword>
<keyword id="KW-0862">Zinc</keyword>
<reference key="1">
    <citation type="journal article" date="2006" name="Mol. Microbiol.">
        <title>Role of pathogenicity island-associated integrases in the genome plasticity of uropathogenic Escherichia coli strain 536.</title>
        <authorList>
            <person name="Hochhut B."/>
            <person name="Wilde C."/>
            <person name="Balling G."/>
            <person name="Middendorf B."/>
            <person name="Dobrindt U."/>
            <person name="Brzuszkiewicz E."/>
            <person name="Gottschalk G."/>
            <person name="Carniel E."/>
            <person name="Hacker J."/>
        </authorList>
    </citation>
    <scope>NUCLEOTIDE SEQUENCE [LARGE SCALE GENOMIC DNA]</scope>
    <source>
        <strain>536 / UPEC</strain>
    </source>
</reference>
<sequence>MKIKTRFAPSPTGYLHVGGARTALYSWLFARNHGGEFVLRIEDTDLERSTPEAIEAIMDGMNWLNLEWDEGPYYQTKRFDRYNAVIDQMLEEGTAYKCYCSKERLEALREEQMAKGEKPRYDGRCRHSHEHHADDEPCVVRFANPQEGSVVFDDQIRGPIEFSNQELDDLIIRRTDGSPTYNFCVVVDDWDMEITHVIRGEDHINNTPRQINILKALKAPVPVYAHVSMINGDDGKKLSKRHGAVSVMQYRDDGYLPEALLNYLVRLGWSHGDQEIFTREEMIKYFALNAVSKSASAFNTDKLLWLNHHYINALPPEYVATHLQWHIEQENIDTRNGPQLADLVKLLGERCKTLKEMAQSCRYFYEDFAEFDADAAKKHLRPVARQPLEVVRDKLTAITDWTAENVHHAIQATADELEVGMGKVGMPLRVAVTGAGQSPALDVTVHAIGKTRSIERINKALAFIAERENQQ</sequence>
<proteinExistence type="inferred from homology"/>
<feature type="chain" id="PRO_1000001896" description="Glutamate--tRNA ligase">
    <location>
        <begin position="1"/>
        <end position="471"/>
    </location>
</feature>
<feature type="short sequence motif" description="'HIGH' region" evidence="1">
    <location>
        <begin position="9"/>
        <end position="19"/>
    </location>
</feature>
<feature type="short sequence motif" description="'KMSKS' region" evidence="1">
    <location>
        <begin position="237"/>
        <end position="241"/>
    </location>
</feature>
<feature type="binding site" evidence="1">
    <location>
        <position position="98"/>
    </location>
    <ligand>
        <name>Zn(2+)</name>
        <dbReference type="ChEBI" id="CHEBI:29105"/>
    </ligand>
</feature>
<feature type="binding site" evidence="1">
    <location>
        <position position="100"/>
    </location>
    <ligand>
        <name>Zn(2+)</name>
        <dbReference type="ChEBI" id="CHEBI:29105"/>
    </ligand>
</feature>
<feature type="binding site" evidence="1">
    <location>
        <position position="125"/>
    </location>
    <ligand>
        <name>Zn(2+)</name>
        <dbReference type="ChEBI" id="CHEBI:29105"/>
    </ligand>
</feature>
<feature type="binding site" evidence="1">
    <location>
        <position position="127"/>
    </location>
    <ligand>
        <name>Zn(2+)</name>
        <dbReference type="ChEBI" id="CHEBI:29105"/>
    </ligand>
</feature>
<feature type="binding site" evidence="1">
    <location>
        <position position="240"/>
    </location>
    <ligand>
        <name>ATP</name>
        <dbReference type="ChEBI" id="CHEBI:30616"/>
    </ligand>
</feature>
<organism>
    <name type="scientific">Escherichia coli O6:K15:H31 (strain 536 / UPEC)</name>
    <dbReference type="NCBI Taxonomy" id="362663"/>
    <lineage>
        <taxon>Bacteria</taxon>
        <taxon>Pseudomonadati</taxon>
        <taxon>Pseudomonadota</taxon>
        <taxon>Gammaproteobacteria</taxon>
        <taxon>Enterobacterales</taxon>
        <taxon>Enterobacteriaceae</taxon>
        <taxon>Escherichia</taxon>
    </lineage>
</organism>
<dbReference type="EC" id="6.1.1.17" evidence="1"/>
<dbReference type="EMBL" id="CP000247">
    <property type="protein sequence ID" value="ABG70415.1"/>
    <property type="molecule type" value="Genomic_DNA"/>
</dbReference>
<dbReference type="RefSeq" id="WP_000695633.1">
    <property type="nucleotide sequence ID" value="NC_008253.1"/>
</dbReference>
<dbReference type="SMR" id="Q0TF64"/>
<dbReference type="KEGG" id="ecp:ECP_2422"/>
<dbReference type="HOGENOM" id="CLU_015768_6_0_6"/>
<dbReference type="Proteomes" id="UP000009182">
    <property type="component" value="Chromosome"/>
</dbReference>
<dbReference type="GO" id="GO:0005829">
    <property type="term" value="C:cytosol"/>
    <property type="evidence" value="ECO:0007669"/>
    <property type="project" value="TreeGrafter"/>
</dbReference>
<dbReference type="GO" id="GO:0005524">
    <property type="term" value="F:ATP binding"/>
    <property type="evidence" value="ECO:0007669"/>
    <property type="project" value="UniProtKB-UniRule"/>
</dbReference>
<dbReference type="GO" id="GO:0004818">
    <property type="term" value="F:glutamate-tRNA ligase activity"/>
    <property type="evidence" value="ECO:0007669"/>
    <property type="project" value="UniProtKB-UniRule"/>
</dbReference>
<dbReference type="GO" id="GO:0000049">
    <property type="term" value="F:tRNA binding"/>
    <property type="evidence" value="ECO:0007669"/>
    <property type="project" value="InterPro"/>
</dbReference>
<dbReference type="GO" id="GO:0008270">
    <property type="term" value="F:zinc ion binding"/>
    <property type="evidence" value="ECO:0007669"/>
    <property type="project" value="UniProtKB-UniRule"/>
</dbReference>
<dbReference type="GO" id="GO:0006424">
    <property type="term" value="P:glutamyl-tRNA aminoacylation"/>
    <property type="evidence" value="ECO:0007669"/>
    <property type="project" value="UniProtKB-UniRule"/>
</dbReference>
<dbReference type="CDD" id="cd00808">
    <property type="entry name" value="GluRS_core"/>
    <property type="match status" value="1"/>
</dbReference>
<dbReference type="FunFam" id="1.10.10.350:FF:000001">
    <property type="entry name" value="Glutamate--tRNA ligase"/>
    <property type="match status" value="1"/>
</dbReference>
<dbReference type="FunFam" id="3.40.50.620:FF:000007">
    <property type="entry name" value="Glutamate--tRNA ligase"/>
    <property type="match status" value="1"/>
</dbReference>
<dbReference type="Gene3D" id="1.10.10.350">
    <property type="match status" value="1"/>
</dbReference>
<dbReference type="Gene3D" id="3.40.50.620">
    <property type="entry name" value="HUPs"/>
    <property type="match status" value="1"/>
</dbReference>
<dbReference type="HAMAP" id="MF_00022">
    <property type="entry name" value="Glu_tRNA_synth_type1"/>
    <property type="match status" value="1"/>
</dbReference>
<dbReference type="InterPro" id="IPR045462">
    <property type="entry name" value="aa-tRNA-synth_I_cd-bd"/>
</dbReference>
<dbReference type="InterPro" id="IPR020751">
    <property type="entry name" value="aa-tRNA-synth_I_codon-bd_sub2"/>
</dbReference>
<dbReference type="InterPro" id="IPR001412">
    <property type="entry name" value="aa-tRNA-synth_I_CS"/>
</dbReference>
<dbReference type="InterPro" id="IPR008925">
    <property type="entry name" value="aa_tRNA-synth_I_cd-bd_sf"/>
</dbReference>
<dbReference type="InterPro" id="IPR004527">
    <property type="entry name" value="Glu-tRNA-ligase_bac/mito"/>
</dbReference>
<dbReference type="InterPro" id="IPR000924">
    <property type="entry name" value="Glu/Gln-tRNA-synth"/>
</dbReference>
<dbReference type="InterPro" id="IPR020058">
    <property type="entry name" value="Glu/Gln-tRNA-synth_Ib_cat-dom"/>
</dbReference>
<dbReference type="InterPro" id="IPR049940">
    <property type="entry name" value="GluQ/Sye"/>
</dbReference>
<dbReference type="InterPro" id="IPR033910">
    <property type="entry name" value="GluRS_core"/>
</dbReference>
<dbReference type="InterPro" id="IPR014729">
    <property type="entry name" value="Rossmann-like_a/b/a_fold"/>
</dbReference>
<dbReference type="NCBIfam" id="TIGR00464">
    <property type="entry name" value="gltX_bact"/>
    <property type="match status" value="1"/>
</dbReference>
<dbReference type="PANTHER" id="PTHR43311">
    <property type="entry name" value="GLUTAMATE--TRNA LIGASE"/>
    <property type="match status" value="1"/>
</dbReference>
<dbReference type="PANTHER" id="PTHR43311:SF2">
    <property type="entry name" value="GLUTAMATE--TRNA LIGASE, MITOCHONDRIAL-RELATED"/>
    <property type="match status" value="1"/>
</dbReference>
<dbReference type="Pfam" id="PF19269">
    <property type="entry name" value="Anticodon_2"/>
    <property type="match status" value="1"/>
</dbReference>
<dbReference type="Pfam" id="PF00749">
    <property type="entry name" value="tRNA-synt_1c"/>
    <property type="match status" value="1"/>
</dbReference>
<dbReference type="PRINTS" id="PR00987">
    <property type="entry name" value="TRNASYNTHGLU"/>
</dbReference>
<dbReference type="SUPFAM" id="SSF48163">
    <property type="entry name" value="An anticodon-binding domain of class I aminoacyl-tRNA synthetases"/>
    <property type="match status" value="1"/>
</dbReference>
<dbReference type="SUPFAM" id="SSF52374">
    <property type="entry name" value="Nucleotidylyl transferase"/>
    <property type="match status" value="1"/>
</dbReference>
<dbReference type="PROSITE" id="PS00178">
    <property type="entry name" value="AA_TRNA_LIGASE_I"/>
    <property type="match status" value="1"/>
</dbReference>
<protein>
    <recommendedName>
        <fullName evidence="1">Glutamate--tRNA ligase</fullName>
        <ecNumber evidence="1">6.1.1.17</ecNumber>
    </recommendedName>
    <alternativeName>
        <fullName evidence="1">Glutamyl-tRNA synthetase</fullName>
        <shortName evidence="1">GluRS</shortName>
    </alternativeName>
</protein>
<gene>
    <name evidence="1" type="primary">gltX</name>
    <name type="ordered locus">ECP_2422</name>
</gene>
<name>SYE_ECOL5</name>